<accession>Q8WZS6</accession>
<reference key="1">
    <citation type="journal article" date="2003" name="Nature">
        <title>The genome sequence of the filamentous fungus Neurospora crassa.</title>
        <authorList>
            <person name="Galagan J.E."/>
            <person name="Calvo S.E."/>
            <person name="Borkovich K.A."/>
            <person name="Selker E.U."/>
            <person name="Read N.D."/>
            <person name="Jaffe D.B."/>
            <person name="FitzHugh W."/>
            <person name="Ma L.-J."/>
            <person name="Smirnov S."/>
            <person name="Purcell S."/>
            <person name="Rehman B."/>
            <person name="Elkins T."/>
            <person name="Engels R."/>
            <person name="Wang S."/>
            <person name="Nielsen C.B."/>
            <person name="Butler J."/>
            <person name="Endrizzi M."/>
            <person name="Qui D."/>
            <person name="Ianakiev P."/>
            <person name="Bell-Pedersen D."/>
            <person name="Nelson M.A."/>
            <person name="Werner-Washburne M."/>
            <person name="Selitrennikoff C.P."/>
            <person name="Kinsey J.A."/>
            <person name="Braun E.L."/>
            <person name="Zelter A."/>
            <person name="Schulte U."/>
            <person name="Kothe G.O."/>
            <person name="Jedd G."/>
            <person name="Mewes H.-W."/>
            <person name="Staben C."/>
            <person name="Marcotte E."/>
            <person name="Greenberg D."/>
            <person name="Roy A."/>
            <person name="Foley K."/>
            <person name="Naylor J."/>
            <person name="Stange-Thomann N."/>
            <person name="Barrett R."/>
            <person name="Gnerre S."/>
            <person name="Kamal M."/>
            <person name="Kamvysselis M."/>
            <person name="Mauceli E.W."/>
            <person name="Bielke C."/>
            <person name="Rudd S."/>
            <person name="Frishman D."/>
            <person name="Krystofova S."/>
            <person name="Rasmussen C."/>
            <person name="Metzenberg R.L."/>
            <person name="Perkins D.D."/>
            <person name="Kroken S."/>
            <person name="Cogoni C."/>
            <person name="Macino G."/>
            <person name="Catcheside D.E.A."/>
            <person name="Li W."/>
            <person name="Pratt R.J."/>
            <person name="Osmani S.A."/>
            <person name="DeSouza C.P.C."/>
            <person name="Glass N.L."/>
            <person name="Orbach M.J."/>
            <person name="Berglund J.A."/>
            <person name="Voelker R."/>
            <person name="Yarden O."/>
            <person name="Plamann M."/>
            <person name="Seiler S."/>
            <person name="Dunlap J.C."/>
            <person name="Radford A."/>
            <person name="Aramayo R."/>
            <person name="Natvig D.O."/>
            <person name="Alex L.A."/>
            <person name="Mannhaupt G."/>
            <person name="Ebbole D.J."/>
            <person name="Freitag M."/>
            <person name="Paulsen I."/>
            <person name="Sachs M.S."/>
            <person name="Lander E.S."/>
            <person name="Nusbaum C."/>
            <person name="Birren B.W."/>
        </authorList>
    </citation>
    <scope>NUCLEOTIDE SEQUENCE [LARGE SCALE GENOMIC DNA]</scope>
    <source>
        <strain>ATCC 24698 / 74-OR23-1A / CBS 708.71 / DSM 1257 / FGSC 987</strain>
    </source>
</reference>
<protein>
    <recommendedName>
        <fullName>Endoribonuclease ysh-1</fullName>
        <ecNumber>3.1.27.-</ecNumber>
    </recommendedName>
    <alternativeName>
        <fullName>mRNA 3'-end-processing protein ysh-1</fullName>
    </alternativeName>
</protein>
<evidence type="ECO:0000250" key="1"/>
<evidence type="ECO:0000255" key="2"/>
<evidence type="ECO:0000256" key="3">
    <source>
        <dbReference type="SAM" id="MobiDB-lite"/>
    </source>
</evidence>
<evidence type="ECO:0000305" key="4"/>
<comment type="function">
    <text evidence="1">Component of the cleavage factor I (CF I) involved in pre-mRNA 3'-end processing.</text>
</comment>
<comment type="subcellular location">
    <subcellularLocation>
        <location evidence="1">Nucleus</location>
    </subcellularLocation>
</comment>
<comment type="similarity">
    <text evidence="4">Belongs to the metallo-beta-lactamase superfamily. RNA-metabolizing metallo-beta-lactamase-like family. CPSF2/YSH1 subfamily.</text>
</comment>
<name>YSH1_NEUCR</name>
<organism>
    <name type="scientific">Neurospora crassa (strain ATCC 24698 / 74-OR23-1A / CBS 708.71 / DSM 1257 / FGSC 987)</name>
    <dbReference type="NCBI Taxonomy" id="367110"/>
    <lineage>
        <taxon>Eukaryota</taxon>
        <taxon>Fungi</taxon>
        <taxon>Dikarya</taxon>
        <taxon>Ascomycota</taxon>
        <taxon>Pezizomycotina</taxon>
        <taxon>Sordariomycetes</taxon>
        <taxon>Sordariomycetidae</taxon>
        <taxon>Sordariales</taxon>
        <taxon>Sordariaceae</taxon>
        <taxon>Neurospora</taxon>
    </lineage>
</organism>
<proteinExistence type="inferred from homology"/>
<gene>
    <name type="primary">ysh-1</name>
    <name type="ORF">B8L21.110</name>
    <name type="ORF">NCU03479</name>
</gene>
<feature type="chain" id="PRO_0000238905" description="Endoribonuclease ysh-1">
    <location>
        <begin position="1"/>
        <end position="850"/>
    </location>
</feature>
<feature type="region of interest" description="Disordered" evidence="3">
    <location>
        <begin position="685"/>
        <end position="708"/>
    </location>
</feature>
<feature type="region of interest" description="Disordered" evidence="3">
    <location>
        <begin position="732"/>
        <end position="784"/>
    </location>
</feature>
<feature type="compositionally biased region" description="Polar residues" evidence="3">
    <location>
        <begin position="744"/>
        <end position="754"/>
    </location>
</feature>
<feature type="compositionally biased region" description="Basic and acidic residues" evidence="3">
    <location>
        <begin position="755"/>
        <end position="766"/>
    </location>
</feature>
<feature type="compositionally biased region" description="Acidic residues" evidence="3">
    <location>
        <begin position="767"/>
        <end position="781"/>
    </location>
</feature>
<feature type="active site" description="Proton donor" evidence="2">
    <location>
        <position position="442"/>
    </location>
</feature>
<feature type="binding site" evidence="1">
    <location>
        <position position="83"/>
    </location>
    <ligand>
        <name>Zn(2+)</name>
        <dbReference type="ChEBI" id="CHEBI:29105"/>
        <label>1</label>
    </ligand>
</feature>
<feature type="binding site" evidence="1">
    <location>
        <position position="85"/>
    </location>
    <ligand>
        <name>Zn(2+)</name>
        <dbReference type="ChEBI" id="CHEBI:29105"/>
        <label>1</label>
    </ligand>
</feature>
<feature type="binding site" evidence="1">
    <location>
        <position position="87"/>
    </location>
    <ligand>
        <name>Zn(2+)</name>
        <dbReference type="ChEBI" id="CHEBI:29105"/>
        <label>2</label>
    </ligand>
</feature>
<feature type="binding site" evidence="1">
    <location>
        <position position="88"/>
    </location>
    <ligand>
        <name>Zn(2+)</name>
        <dbReference type="ChEBI" id="CHEBI:29105"/>
        <label>2</label>
    </ligand>
</feature>
<feature type="binding site" evidence="1">
    <location>
        <position position="173"/>
    </location>
    <ligand>
        <name>Zn(2+)</name>
        <dbReference type="ChEBI" id="CHEBI:29105"/>
        <label>1</label>
    </ligand>
</feature>
<feature type="binding site" evidence="1">
    <location>
        <position position="194"/>
    </location>
    <ligand>
        <name>Zn(2+)</name>
        <dbReference type="ChEBI" id="CHEBI:29105"/>
        <label>1</label>
    </ligand>
</feature>
<feature type="binding site" evidence="1">
    <location>
        <position position="194"/>
    </location>
    <ligand>
        <name>Zn(2+)</name>
        <dbReference type="ChEBI" id="CHEBI:29105"/>
        <label>2</label>
    </ligand>
</feature>
<feature type="binding site" evidence="1">
    <location>
        <position position="464"/>
    </location>
    <ligand>
        <name>Zn(2+)</name>
        <dbReference type="ChEBI" id="CHEBI:29105"/>
        <label>2</label>
    </ligand>
</feature>
<sequence length="850" mass="94079">MASKRKASAMATEPEEPVDPADELMFLNLGGGNEVGRSCHIIQYKGKTVMLDAGQHPAYDGLAALPFFDDFDLSTVDVLLISHFHIDHAASLPYVLAKTNFRGRVFMTHATKAIYKWLIQDSVRVGNTSSNPQSSLVYTEEDHLKTFPMIEAIDYNTTHTISSIRITPYPAGHVLGAAMFLIEIAGLKIFFTGDYSREEDRHLISAKVPKGVKIDVLITESTYGIASHIPRPEREQALMKSITGILNRGGRVLMPVFALGRAQELLLILDEYWGKHAEYQKYPIYYASNLARKCMLVYQTYVGSMNDNIKRLFRERLAESESSGDGAGKGGPWDFRFIRSLKSLDRFEDVGGCVMLASPGMLQNGVSRELLERWAPSEKNGVIITGYSVEGTMAKQLLQEPEQIQAVMSRNIAGARRGPGGDAEKVMIPRRCTVQEFSFAAHVDGVENREFIEEVAAPVVILVHGEVHNMMRLKSKLLSLNATKEHKVKVFSPRNCEELRIPFKTDKVAKVVGKLASIPPSLKEAKTGHDGPLPSSTEPQLITGVLVQNDFKMSLMAPEDLREYAGLTTTTIACKQRLKLSAAGIDLIKWGLEGTFGAVEELPEVKPKLEIVKSENGDTKMEEADEELPHGDDVVAAYLVMGCVTVRYRASGEVELEWEGNMLNDGIADAVMAVLLGIESSPAAVKRSATKNPHTHSPLPADKNPHSHLTPEDRFFRLCMFLEAQFGQDNVSPIVEPKLPPLSPTTKAITSPSEETAKSSDVKSDADADASMDVSEEDEDEQQLKARERAEVERLERMGIPKPGVRIKVDKMEAKVWLEDLEVECANKIFRERVRAVVERAVEVVAPLWG</sequence>
<dbReference type="EC" id="3.1.27.-"/>
<dbReference type="EMBL" id="AL669989">
    <property type="protein sequence ID" value="CAD21097.1"/>
    <property type="molecule type" value="Genomic_DNA"/>
</dbReference>
<dbReference type="EMBL" id="CM002237">
    <property type="protein sequence ID" value="EAA27132.1"/>
    <property type="molecule type" value="Genomic_DNA"/>
</dbReference>
<dbReference type="RefSeq" id="XP_956368.1">
    <property type="nucleotide sequence ID" value="XM_951275.2"/>
</dbReference>
<dbReference type="SMR" id="Q8WZS6"/>
<dbReference type="FunCoup" id="Q8WZS6">
    <property type="interactions" value="927"/>
</dbReference>
<dbReference type="STRING" id="367110.Q8WZS6"/>
<dbReference type="PaxDb" id="5141-EFNCRP00000002675"/>
<dbReference type="EnsemblFungi" id="EAA27132">
    <property type="protein sequence ID" value="EAA27132"/>
    <property type="gene ID" value="NCU03479"/>
</dbReference>
<dbReference type="GeneID" id="3872515"/>
<dbReference type="KEGG" id="ncr:NCU03479"/>
<dbReference type="VEuPathDB" id="FungiDB:NCU03479"/>
<dbReference type="HOGENOM" id="CLU_009673_2_1_1"/>
<dbReference type="InParanoid" id="Q8WZS6"/>
<dbReference type="OMA" id="CKQHITL"/>
<dbReference type="OrthoDB" id="10249535at2759"/>
<dbReference type="Proteomes" id="UP000001805">
    <property type="component" value="Chromosome 6, Linkage Group II"/>
</dbReference>
<dbReference type="GO" id="GO:0005847">
    <property type="term" value="C:mRNA cleavage and polyadenylation specificity factor complex"/>
    <property type="evidence" value="ECO:0000318"/>
    <property type="project" value="GO_Central"/>
</dbReference>
<dbReference type="GO" id="GO:0004534">
    <property type="term" value="F:5'-3' RNA exonuclease activity"/>
    <property type="evidence" value="ECO:0000318"/>
    <property type="project" value="GO_Central"/>
</dbReference>
<dbReference type="GO" id="GO:0046872">
    <property type="term" value="F:metal ion binding"/>
    <property type="evidence" value="ECO:0007669"/>
    <property type="project" value="UniProtKB-KW"/>
</dbReference>
<dbReference type="GO" id="GO:0003723">
    <property type="term" value="F:RNA binding"/>
    <property type="evidence" value="ECO:0000318"/>
    <property type="project" value="GO_Central"/>
</dbReference>
<dbReference type="GO" id="GO:0004521">
    <property type="term" value="F:RNA endonuclease activity"/>
    <property type="evidence" value="ECO:0000318"/>
    <property type="project" value="GO_Central"/>
</dbReference>
<dbReference type="GO" id="GO:0006397">
    <property type="term" value="P:mRNA processing"/>
    <property type="evidence" value="ECO:0007669"/>
    <property type="project" value="UniProtKB-KW"/>
</dbReference>
<dbReference type="GO" id="GO:0044550">
    <property type="term" value="P:secondary metabolite biosynthetic process"/>
    <property type="evidence" value="ECO:0007669"/>
    <property type="project" value="UniProtKB-ARBA"/>
</dbReference>
<dbReference type="CDD" id="cd16292">
    <property type="entry name" value="CPSF3-like_MBL-fold"/>
    <property type="match status" value="1"/>
</dbReference>
<dbReference type="FunFam" id="3.60.15.10:FF:000001">
    <property type="entry name" value="Cleavage and polyadenylation specificity factor"/>
    <property type="match status" value="1"/>
</dbReference>
<dbReference type="FunFam" id="3.40.50.10890:FF:000004">
    <property type="entry name" value="Cleavage and polyadenylation specifity factor"/>
    <property type="match status" value="1"/>
</dbReference>
<dbReference type="Gene3D" id="3.40.50.10890">
    <property type="match status" value="1"/>
</dbReference>
<dbReference type="Gene3D" id="3.60.15.10">
    <property type="entry name" value="Ribonuclease Z/Hydroxyacylglutathione hydrolase-like"/>
    <property type="match status" value="1"/>
</dbReference>
<dbReference type="InterPro" id="IPR022712">
    <property type="entry name" value="Beta_Casp"/>
</dbReference>
<dbReference type="InterPro" id="IPR021718">
    <property type="entry name" value="CPSF73-100_C"/>
</dbReference>
<dbReference type="InterPro" id="IPR050698">
    <property type="entry name" value="MBL"/>
</dbReference>
<dbReference type="InterPro" id="IPR001279">
    <property type="entry name" value="Metallo-B-lactamas"/>
</dbReference>
<dbReference type="InterPro" id="IPR036866">
    <property type="entry name" value="RibonucZ/Hydroxyglut_hydro"/>
</dbReference>
<dbReference type="InterPro" id="IPR011108">
    <property type="entry name" value="RMMBL"/>
</dbReference>
<dbReference type="PANTHER" id="PTHR11203">
    <property type="entry name" value="CLEAVAGE AND POLYADENYLATION SPECIFICITY FACTOR FAMILY MEMBER"/>
    <property type="match status" value="1"/>
</dbReference>
<dbReference type="PANTHER" id="PTHR11203:SF11">
    <property type="entry name" value="CLEAVAGE AND POLYADENYLATION SPECIFICITY FACTOR SUBUNIT 3"/>
    <property type="match status" value="1"/>
</dbReference>
<dbReference type="Pfam" id="PF10996">
    <property type="entry name" value="Beta-Casp"/>
    <property type="match status" value="1"/>
</dbReference>
<dbReference type="Pfam" id="PF11718">
    <property type="entry name" value="CPSF73-100_C"/>
    <property type="match status" value="1"/>
</dbReference>
<dbReference type="Pfam" id="PF00753">
    <property type="entry name" value="Lactamase_B"/>
    <property type="match status" value="1"/>
</dbReference>
<dbReference type="Pfam" id="PF07521">
    <property type="entry name" value="RMMBL"/>
    <property type="match status" value="1"/>
</dbReference>
<dbReference type="SMART" id="SM01027">
    <property type="entry name" value="Beta-Casp"/>
    <property type="match status" value="1"/>
</dbReference>
<dbReference type="SMART" id="SM01098">
    <property type="entry name" value="CPSF73-100_C"/>
    <property type="match status" value="1"/>
</dbReference>
<dbReference type="SMART" id="SM00849">
    <property type="entry name" value="Lactamase_B"/>
    <property type="match status" value="1"/>
</dbReference>
<dbReference type="SUPFAM" id="SSF56281">
    <property type="entry name" value="Metallo-hydrolase/oxidoreductase"/>
    <property type="match status" value="1"/>
</dbReference>
<keyword id="KW-0255">Endonuclease</keyword>
<keyword id="KW-0378">Hydrolase</keyword>
<keyword id="KW-0479">Metal-binding</keyword>
<keyword id="KW-0507">mRNA processing</keyword>
<keyword id="KW-0540">Nuclease</keyword>
<keyword id="KW-0539">Nucleus</keyword>
<keyword id="KW-1185">Reference proteome</keyword>
<keyword id="KW-0862">Zinc</keyword>